<keyword id="KW-0067">ATP-binding</keyword>
<keyword id="KW-1003">Cell membrane</keyword>
<keyword id="KW-0418">Kinase</keyword>
<keyword id="KW-0472">Membrane</keyword>
<keyword id="KW-0547">Nucleotide-binding</keyword>
<keyword id="KW-0597">Phosphoprotein</keyword>
<keyword id="KW-1185">Reference proteome</keyword>
<keyword id="KW-0808">Transferase</keyword>
<keyword id="KW-0812">Transmembrane</keyword>
<keyword id="KW-1133">Transmembrane helix</keyword>
<keyword id="KW-0902">Two-component regulatory system</keyword>
<protein>
    <recommendedName>
        <fullName>Sensor histidine kinase YdfH</fullName>
        <ecNumber>2.7.13.3</ecNumber>
    </recommendedName>
</protein>
<sequence>MLIRNPFKDKYYSHDRRALNMLALRVPGLAFILMIYIASIVLQFVSGGWSILLLYAFTILIAIFALLHWHSYRWVKKRVILYFAVQGLITFALANLMTGFFILVIIGLYAFLIGQIIGMADRRRTFLILYLLLLLVINSAYHLHKGEVLHFIVIAAPIMIVIITYAATFFAQVDEKIKAQLTLERLELAHQQVEQLTLQNERQRMARDLHDTLAQGLVSLNMQLDAIHVHLAKGNTERAKEIIQQSMKRVKSTIADARSAIDDLRSKSEEIGVLKERITSLMDHFIESTGMACLLDYRLHQVLDVRTAENCYYIIGECMTNAAKHAEAKTIWISIWDDEKGRLHLTVKDNGKGFDVEKGKKKRGHYGLLGIQERVRAINGQFNIKSTKLKGTQIEITVPIQGEMQDE</sequence>
<accession>P96685</accession>
<accession>Q797G6</accession>
<feature type="chain" id="PRO_0000074917" description="Sensor histidine kinase YdfH">
    <location>
        <begin position="1"/>
        <end position="407"/>
    </location>
</feature>
<feature type="topological domain" description="Cytoplasmic" evidence="2">
    <location>
        <begin position="1"/>
        <end position="25"/>
    </location>
</feature>
<feature type="transmembrane region" description="Helical" evidence="2">
    <location>
        <begin position="26"/>
        <end position="46"/>
    </location>
</feature>
<feature type="transmembrane region" description="Helical" evidence="2">
    <location>
        <begin position="47"/>
        <end position="67"/>
    </location>
</feature>
<feature type="topological domain" description="Cytoplasmic" evidence="2">
    <location>
        <begin position="68"/>
        <end position="78"/>
    </location>
</feature>
<feature type="transmembrane region" description="Helical" evidence="2">
    <location>
        <begin position="79"/>
        <end position="99"/>
    </location>
</feature>
<feature type="transmembrane region" description="Helical" evidence="2">
    <location>
        <begin position="100"/>
        <end position="120"/>
    </location>
</feature>
<feature type="topological domain" description="Cytoplasmic" evidence="2">
    <location>
        <begin position="121"/>
        <end position="125"/>
    </location>
</feature>
<feature type="transmembrane region" description="Helical" evidence="2">
    <location>
        <begin position="126"/>
        <end position="146"/>
    </location>
</feature>
<feature type="topological domain" description="Extracellular" evidence="2">
    <location>
        <begin position="147"/>
        <end position="150"/>
    </location>
</feature>
<feature type="transmembrane region" description="Helical" evidence="2">
    <location>
        <begin position="151"/>
        <end position="171"/>
    </location>
</feature>
<feature type="topological domain" description="Cytoplasmic" evidence="2">
    <location>
        <begin position="172"/>
        <end position="407"/>
    </location>
</feature>
<feature type="domain" description="Histidine kinase">
    <location>
        <begin position="201"/>
        <end position="402"/>
    </location>
</feature>
<feature type="modified residue" description="Phosphohistidine; by autocatalysis" evidence="1">
    <location>
        <position position="210"/>
    </location>
</feature>
<reference key="1">
    <citation type="submission" date="1997-03" db="EMBL/GenBank/DDBJ databases">
        <title>A 148 kbp sequence of the region between 35 and 47 degree of the Bacillus subtilis genome.</title>
        <authorList>
            <person name="Kasahara Y."/>
            <person name="Nakai S."/>
            <person name="Lee S."/>
            <person name="Sadaie Y."/>
            <person name="Ogasawara N."/>
        </authorList>
    </citation>
    <scope>NUCLEOTIDE SEQUENCE [GENOMIC DNA]</scope>
    <source>
        <strain>168</strain>
    </source>
</reference>
<reference key="2">
    <citation type="journal article" date="1997" name="Nature">
        <title>The complete genome sequence of the Gram-positive bacterium Bacillus subtilis.</title>
        <authorList>
            <person name="Kunst F."/>
            <person name="Ogasawara N."/>
            <person name="Moszer I."/>
            <person name="Albertini A.M."/>
            <person name="Alloni G."/>
            <person name="Azevedo V."/>
            <person name="Bertero M.G."/>
            <person name="Bessieres P."/>
            <person name="Bolotin A."/>
            <person name="Borchert S."/>
            <person name="Borriss R."/>
            <person name="Boursier L."/>
            <person name="Brans A."/>
            <person name="Braun M."/>
            <person name="Brignell S.C."/>
            <person name="Bron S."/>
            <person name="Brouillet S."/>
            <person name="Bruschi C.V."/>
            <person name="Caldwell B."/>
            <person name="Capuano V."/>
            <person name="Carter N.M."/>
            <person name="Choi S.-K."/>
            <person name="Codani J.-J."/>
            <person name="Connerton I.F."/>
            <person name="Cummings N.J."/>
            <person name="Daniel R.A."/>
            <person name="Denizot F."/>
            <person name="Devine K.M."/>
            <person name="Duesterhoeft A."/>
            <person name="Ehrlich S.D."/>
            <person name="Emmerson P.T."/>
            <person name="Entian K.-D."/>
            <person name="Errington J."/>
            <person name="Fabret C."/>
            <person name="Ferrari E."/>
            <person name="Foulger D."/>
            <person name="Fritz C."/>
            <person name="Fujita M."/>
            <person name="Fujita Y."/>
            <person name="Fuma S."/>
            <person name="Galizzi A."/>
            <person name="Galleron N."/>
            <person name="Ghim S.-Y."/>
            <person name="Glaser P."/>
            <person name="Goffeau A."/>
            <person name="Golightly E.J."/>
            <person name="Grandi G."/>
            <person name="Guiseppi G."/>
            <person name="Guy B.J."/>
            <person name="Haga K."/>
            <person name="Haiech J."/>
            <person name="Harwood C.R."/>
            <person name="Henaut A."/>
            <person name="Hilbert H."/>
            <person name="Holsappel S."/>
            <person name="Hosono S."/>
            <person name="Hullo M.-F."/>
            <person name="Itaya M."/>
            <person name="Jones L.-M."/>
            <person name="Joris B."/>
            <person name="Karamata D."/>
            <person name="Kasahara Y."/>
            <person name="Klaerr-Blanchard M."/>
            <person name="Klein C."/>
            <person name="Kobayashi Y."/>
            <person name="Koetter P."/>
            <person name="Koningstein G."/>
            <person name="Krogh S."/>
            <person name="Kumano M."/>
            <person name="Kurita K."/>
            <person name="Lapidus A."/>
            <person name="Lardinois S."/>
            <person name="Lauber J."/>
            <person name="Lazarevic V."/>
            <person name="Lee S.-M."/>
            <person name="Levine A."/>
            <person name="Liu H."/>
            <person name="Masuda S."/>
            <person name="Mauel C."/>
            <person name="Medigue C."/>
            <person name="Medina N."/>
            <person name="Mellado R.P."/>
            <person name="Mizuno M."/>
            <person name="Moestl D."/>
            <person name="Nakai S."/>
            <person name="Noback M."/>
            <person name="Noone D."/>
            <person name="O'Reilly M."/>
            <person name="Ogawa K."/>
            <person name="Ogiwara A."/>
            <person name="Oudega B."/>
            <person name="Park S.-H."/>
            <person name="Parro V."/>
            <person name="Pohl T.M."/>
            <person name="Portetelle D."/>
            <person name="Porwollik S."/>
            <person name="Prescott A.M."/>
            <person name="Presecan E."/>
            <person name="Pujic P."/>
            <person name="Purnelle B."/>
            <person name="Rapoport G."/>
            <person name="Rey M."/>
            <person name="Reynolds S."/>
            <person name="Rieger M."/>
            <person name="Rivolta C."/>
            <person name="Rocha E."/>
            <person name="Roche B."/>
            <person name="Rose M."/>
            <person name="Sadaie Y."/>
            <person name="Sato T."/>
            <person name="Scanlan E."/>
            <person name="Schleich S."/>
            <person name="Schroeter R."/>
            <person name="Scoffone F."/>
            <person name="Sekiguchi J."/>
            <person name="Sekowska A."/>
            <person name="Seror S.J."/>
            <person name="Serror P."/>
            <person name="Shin B.-S."/>
            <person name="Soldo B."/>
            <person name="Sorokin A."/>
            <person name="Tacconi E."/>
            <person name="Takagi T."/>
            <person name="Takahashi H."/>
            <person name="Takemaru K."/>
            <person name="Takeuchi M."/>
            <person name="Tamakoshi A."/>
            <person name="Tanaka T."/>
            <person name="Terpstra P."/>
            <person name="Tognoni A."/>
            <person name="Tosato V."/>
            <person name="Uchiyama S."/>
            <person name="Vandenbol M."/>
            <person name="Vannier F."/>
            <person name="Vassarotti A."/>
            <person name="Viari A."/>
            <person name="Wambutt R."/>
            <person name="Wedler E."/>
            <person name="Wedler H."/>
            <person name="Weitzenegger T."/>
            <person name="Winters P."/>
            <person name="Wipat A."/>
            <person name="Yamamoto H."/>
            <person name="Yamane K."/>
            <person name="Yasumoto K."/>
            <person name="Yata K."/>
            <person name="Yoshida K."/>
            <person name="Yoshikawa H.-F."/>
            <person name="Zumstein E."/>
            <person name="Yoshikawa H."/>
            <person name="Danchin A."/>
        </authorList>
    </citation>
    <scope>NUCLEOTIDE SEQUENCE [LARGE SCALE GENOMIC DNA]</scope>
    <source>
        <strain>168</strain>
    </source>
</reference>
<reference key="3">
    <citation type="journal article" date="2001" name="J. Bacteriol.">
        <title>Comprehensive DNA microarray analysis of Bacillus subtilis two-component regulatory systems.</title>
        <authorList>
            <person name="Kobayashi K."/>
            <person name="Ogura M."/>
            <person name="Yamaguchi H."/>
            <person name="Yoshida K."/>
            <person name="Ogasawara N."/>
            <person name="Tanaka T."/>
            <person name="Fujita Y."/>
        </authorList>
    </citation>
    <scope>FUNCTION</scope>
</reference>
<reference key="4">
    <citation type="journal article" date="2005" name="Microbiology">
        <title>The Bacillus subtilis YdfHI two-component system regulates the transcription of ydfJ, a member of the RND superfamily.</title>
        <authorList>
            <person name="Serizawa M."/>
            <person name="Sekiguchi J."/>
        </authorList>
    </citation>
    <scope>FUNCTION</scope>
    <source>
        <strain>168</strain>
    </source>
</reference>
<evidence type="ECO:0000250" key="1"/>
<evidence type="ECO:0000255" key="2"/>
<evidence type="ECO:0000269" key="3">
    <source>
    </source>
</evidence>
<evidence type="ECO:0000269" key="4">
    <source>
    </source>
</evidence>
<evidence type="ECO:0000305" key="5"/>
<gene>
    <name type="primary">ydfH</name>
    <name type="ordered locus">BSU05410</name>
</gene>
<dbReference type="EC" id="2.7.13.3"/>
<dbReference type="EMBL" id="AB001488">
    <property type="protein sequence ID" value="BAA19375.1"/>
    <property type="molecule type" value="Genomic_DNA"/>
</dbReference>
<dbReference type="EMBL" id="AL009126">
    <property type="protein sequence ID" value="CAB12348.1"/>
    <property type="molecule type" value="Genomic_DNA"/>
</dbReference>
<dbReference type="PIR" id="F69780">
    <property type="entry name" value="F69780"/>
</dbReference>
<dbReference type="RefSeq" id="NP_388422.1">
    <property type="nucleotide sequence ID" value="NC_000964.3"/>
</dbReference>
<dbReference type="RefSeq" id="WP_010886422.1">
    <property type="nucleotide sequence ID" value="NZ_OZ025638.1"/>
</dbReference>
<dbReference type="SMR" id="P96685"/>
<dbReference type="FunCoup" id="P96685">
    <property type="interactions" value="278"/>
</dbReference>
<dbReference type="STRING" id="224308.BSU05410"/>
<dbReference type="PaxDb" id="224308-BSU05410"/>
<dbReference type="EnsemblBacteria" id="CAB12348">
    <property type="protein sequence ID" value="CAB12348"/>
    <property type="gene ID" value="BSU_05410"/>
</dbReference>
<dbReference type="GeneID" id="938076"/>
<dbReference type="KEGG" id="bsu:BSU05410"/>
<dbReference type="PATRIC" id="fig|224308.179.peg.580"/>
<dbReference type="eggNOG" id="COG4585">
    <property type="taxonomic scope" value="Bacteria"/>
</dbReference>
<dbReference type="InParanoid" id="P96685"/>
<dbReference type="OrthoDB" id="9781904at2"/>
<dbReference type="PhylomeDB" id="P96685"/>
<dbReference type="BioCyc" id="BSUB:BSU05410-MONOMER"/>
<dbReference type="Proteomes" id="UP000001570">
    <property type="component" value="Chromosome"/>
</dbReference>
<dbReference type="GO" id="GO:0005886">
    <property type="term" value="C:plasma membrane"/>
    <property type="evidence" value="ECO:0000318"/>
    <property type="project" value="GO_Central"/>
</dbReference>
<dbReference type="GO" id="GO:0005524">
    <property type="term" value="F:ATP binding"/>
    <property type="evidence" value="ECO:0007669"/>
    <property type="project" value="UniProtKB-KW"/>
</dbReference>
<dbReference type="GO" id="GO:0000155">
    <property type="term" value="F:phosphorelay sensor kinase activity"/>
    <property type="evidence" value="ECO:0007669"/>
    <property type="project" value="InterPro"/>
</dbReference>
<dbReference type="GO" id="GO:0046983">
    <property type="term" value="F:protein dimerization activity"/>
    <property type="evidence" value="ECO:0007669"/>
    <property type="project" value="InterPro"/>
</dbReference>
<dbReference type="GO" id="GO:0004672">
    <property type="term" value="F:protein kinase activity"/>
    <property type="evidence" value="ECO:0000318"/>
    <property type="project" value="GO_Central"/>
</dbReference>
<dbReference type="CDD" id="cd16917">
    <property type="entry name" value="HATPase_UhpB-NarQ-NarX-like"/>
    <property type="match status" value="1"/>
</dbReference>
<dbReference type="Gene3D" id="1.20.5.1930">
    <property type="match status" value="1"/>
</dbReference>
<dbReference type="Gene3D" id="3.30.565.10">
    <property type="entry name" value="Histidine kinase-like ATPase, C-terminal domain"/>
    <property type="match status" value="1"/>
</dbReference>
<dbReference type="InterPro" id="IPR036890">
    <property type="entry name" value="HATPase_C_sf"/>
</dbReference>
<dbReference type="InterPro" id="IPR050482">
    <property type="entry name" value="Sensor_HK_TwoCompSys"/>
</dbReference>
<dbReference type="InterPro" id="IPR011712">
    <property type="entry name" value="Sig_transdc_His_kin_sub3_dim/P"/>
</dbReference>
<dbReference type="PANTHER" id="PTHR24421">
    <property type="entry name" value="NITRATE/NITRITE SENSOR PROTEIN NARX-RELATED"/>
    <property type="match status" value="1"/>
</dbReference>
<dbReference type="PANTHER" id="PTHR24421:SF55">
    <property type="entry name" value="SENSOR HISTIDINE KINASE YDFH"/>
    <property type="match status" value="1"/>
</dbReference>
<dbReference type="Pfam" id="PF02518">
    <property type="entry name" value="HATPase_c"/>
    <property type="match status" value="1"/>
</dbReference>
<dbReference type="Pfam" id="PF07730">
    <property type="entry name" value="HisKA_3"/>
    <property type="match status" value="1"/>
</dbReference>
<dbReference type="SMART" id="SM00387">
    <property type="entry name" value="HATPase_c"/>
    <property type="match status" value="1"/>
</dbReference>
<dbReference type="SUPFAM" id="SSF55874">
    <property type="entry name" value="ATPase domain of HSP90 chaperone/DNA topoisomerase II/histidine kinase"/>
    <property type="match status" value="1"/>
</dbReference>
<name>YDFH_BACSU</name>
<organism>
    <name type="scientific">Bacillus subtilis (strain 168)</name>
    <dbReference type="NCBI Taxonomy" id="224308"/>
    <lineage>
        <taxon>Bacteria</taxon>
        <taxon>Bacillati</taxon>
        <taxon>Bacillota</taxon>
        <taxon>Bacilli</taxon>
        <taxon>Bacillales</taxon>
        <taxon>Bacillaceae</taxon>
        <taxon>Bacillus</taxon>
    </lineage>
</organism>
<comment type="function">
    <text evidence="3 4">Member of the two-component regulatory system YdfH/YdfI. May activate YdfI by phosphorylation.</text>
</comment>
<comment type="catalytic activity">
    <reaction>
        <text>ATP + protein L-histidine = ADP + protein N-phospho-L-histidine.</text>
        <dbReference type="EC" id="2.7.13.3"/>
    </reaction>
</comment>
<comment type="subcellular location">
    <subcellularLocation>
        <location evidence="5">Cell membrane</location>
        <topology evidence="5">Multi-pass membrane protein</topology>
    </subcellularLocation>
</comment>
<proteinExistence type="inferred from homology"/>